<comment type="function">
    <text evidence="1">Catalyzes the reversible conversion of 2-phosphoglycerate (2-PG) into phosphoenolpyruvate (PEP). It is essential for the degradation of carbohydrates via glycolysis.</text>
</comment>
<comment type="catalytic activity">
    <reaction evidence="1">
        <text>(2R)-2-phosphoglycerate = phosphoenolpyruvate + H2O</text>
        <dbReference type="Rhea" id="RHEA:10164"/>
        <dbReference type="ChEBI" id="CHEBI:15377"/>
        <dbReference type="ChEBI" id="CHEBI:58289"/>
        <dbReference type="ChEBI" id="CHEBI:58702"/>
        <dbReference type="EC" id="4.2.1.11"/>
    </reaction>
</comment>
<comment type="cofactor">
    <cofactor evidence="1">
        <name>Mg(2+)</name>
        <dbReference type="ChEBI" id="CHEBI:18420"/>
    </cofactor>
    <text evidence="1">Binds a second Mg(2+) ion via substrate during catalysis.</text>
</comment>
<comment type="pathway">
    <text evidence="1">Carbohydrate degradation; glycolysis; pyruvate from D-glyceraldehyde 3-phosphate: step 4/5.</text>
</comment>
<comment type="subunit">
    <text evidence="1">Component of the RNA degradosome, a multiprotein complex involved in RNA processing and mRNA degradation.</text>
</comment>
<comment type="subcellular location">
    <subcellularLocation>
        <location evidence="1">Cytoplasm</location>
    </subcellularLocation>
    <subcellularLocation>
        <location evidence="1">Secreted</location>
    </subcellularLocation>
    <subcellularLocation>
        <location evidence="1">Cell surface</location>
    </subcellularLocation>
    <text evidence="1">Fractions of enolase are present in both the cytoplasm and on the cell surface.</text>
</comment>
<comment type="similarity">
    <text evidence="1">Belongs to the enolase family.</text>
</comment>
<reference key="1">
    <citation type="journal article" date="2008" name="J. Bacteriol.">
        <title>The complete genome sequence of Actinobacillus pleuropneumoniae L20 (serotype 5b).</title>
        <authorList>
            <person name="Foote S.J."/>
            <person name="Bosse J.T."/>
            <person name="Bouevitch A.B."/>
            <person name="Langford P.R."/>
            <person name="Young N.M."/>
            <person name="Nash J.H.E."/>
        </authorList>
    </citation>
    <scope>NUCLEOTIDE SEQUENCE [LARGE SCALE GENOMIC DNA]</scope>
    <source>
        <strain>L20</strain>
    </source>
</reference>
<evidence type="ECO:0000255" key="1">
    <source>
        <dbReference type="HAMAP-Rule" id="MF_00318"/>
    </source>
</evidence>
<dbReference type="EC" id="4.2.1.11" evidence="1"/>
<dbReference type="EMBL" id="CP000569">
    <property type="protein sequence ID" value="ABN74205.1"/>
    <property type="molecule type" value="Genomic_DNA"/>
</dbReference>
<dbReference type="RefSeq" id="WP_005597992.1">
    <property type="nucleotide sequence ID" value="NC_009053.1"/>
</dbReference>
<dbReference type="SMR" id="A3N1B9"/>
<dbReference type="STRING" id="416269.APL_1113"/>
<dbReference type="EnsemblBacteria" id="ABN74205">
    <property type="protein sequence ID" value="ABN74205"/>
    <property type="gene ID" value="APL_1113"/>
</dbReference>
<dbReference type="GeneID" id="48599345"/>
<dbReference type="KEGG" id="apl:APL_1113"/>
<dbReference type="eggNOG" id="COG0148">
    <property type="taxonomic scope" value="Bacteria"/>
</dbReference>
<dbReference type="HOGENOM" id="CLU_031223_2_1_6"/>
<dbReference type="UniPathway" id="UPA00109">
    <property type="reaction ID" value="UER00187"/>
</dbReference>
<dbReference type="Proteomes" id="UP000001432">
    <property type="component" value="Chromosome"/>
</dbReference>
<dbReference type="GO" id="GO:0009986">
    <property type="term" value="C:cell surface"/>
    <property type="evidence" value="ECO:0007669"/>
    <property type="project" value="UniProtKB-SubCell"/>
</dbReference>
<dbReference type="GO" id="GO:0005576">
    <property type="term" value="C:extracellular region"/>
    <property type="evidence" value="ECO:0007669"/>
    <property type="project" value="UniProtKB-SubCell"/>
</dbReference>
<dbReference type="GO" id="GO:0000015">
    <property type="term" value="C:phosphopyruvate hydratase complex"/>
    <property type="evidence" value="ECO:0007669"/>
    <property type="project" value="InterPro"/>
</dbReference>
<dbReference type="GO" id="GO:0000287">
    <property type="term" value="F:magnesium ion binding"/>
    <property type="evidence" value="ECO:0007669"/>
    <property type="project" value="UniProtKB-UniRule"/>
</dbReference>
<dbReference type="GO" id="GO:0004634">
    <property type="term" value="F:phosphopyruvate hydratase activity"/>
    <property type="evidence" value="ECO:0007669"/>
    <property type="project" value="UniProtKB-UniRule"/>
</dbReference>
<dbReference type="GO" id="GO:0006096">
    <property type="term" value="P:glycolytic process"/>
    <property type="evidence" value="ECO:0007669"/>
    <property type="project" value="UniProtKB-UniRule"/>
</dbReference>
<dbReference type="CDD" id="cd03313">
    <property type="entry name" value="enolase"/>
    <property type="match status" value="1"/>
</dbReference>
<dbReference type="FunFam" id="3.20.20.120:FF:000001">
    <property type="entry name" value="Enolase"/>
    <property type="match status" value="1"/>
</dbReference>
<dbReference type="FunFam" id="3.30.390.10:FF:000001">
    <property type="entry name" value="Enolase"/>
    <property type="match status" value="1"/>
</dbReference>
<dbReference type="Gene3D" id="3.20.20.120">
    <property type="entry name" value="Enolase-like C-terminal domain"/>
    <property type="match status" value="1"/>
</dbReference>
<dbReference type="Gene3D" id="3.30.390.10">
    <property type="entry name" value="Enolase-like, N-terminal domain"/>
    <property type="match status" value="1"/>
</dbReference>
<dbReference type="HAMAP" id="MF_00318">
    <property type="entry name" value="Enolase"/>
    <property type="match status" value="1"/>
</dbReference>
<dbReference type="InterPro" id="IPR000941">
    <property type="entry name" value="Enolase"/>
</dbReference>
<dbReference type="InterPro" id="IPR036849">
    <property type="entry name" value="Enolase-like_C_sf"/>
</dbReference>
<dbReference type="InterPro" id="IPR029017">
    <property type="entry name" value="Enolase-like_N"/>
</dbReference>
<dbReference type="InterPro" id="IPR020810">
    <property type="entry name" value="Enolase_C"/>
</dbReference>
<dbReference type="InterPro" id="IPR020809">
    <property type="entry name" value="Enolase_CS"/>
</dbReference>
<dbReference type="InterPro" id="IPR020811">
    <property type="entry name" value="Enolase_N"/>
</dbReference>
<dbReference type="NCBIfam" id="TIGR01060">
    <property type="entry name" value="eno"/>
    <property type="match status" value="1"/>
</dbReference>
<dbReference type="PANTHER" id="PTHR11902">
    <property type="entry name" value="ENOLASE"/>
    <property type="match status" value="1"/>
</dbReference>
<dbReference type="PANTHER" id="PTHR11902:SF1">
    <property type="entry name" value="ENOLASE"/>
    <property type="match status" value="1"/>
</dbReference>
<dbReference type="Pfam" id="PF00113">
    <property type="entry name" value="Enolase_C"/>
    <property type="match status" value="1"/>
</dbReference>
<dbReference type="Pfam" id="PF03952">
    <property type="entry name" value="Enolase_N"/>
    <property type="match status" value="1"/>
</dbReference>
<dbReference type="PIRSF" id="PIRSF001400">
    <property type="entry name" value="Enolase"/>
    <property type="match status" value="1"/>
</dbReference>
<dbReference type="PRINTS" id="PR00148">
    <property type="entry name" value="ENOLASE"/>
</dbReference>
<dbReference type="SFLD" id="SFLDS00001">
    <property type="entry name" value="Enolase"/>
    <property type="match status" value="1"/>
</dbReference>
<dbReference type="SFLD" id="SFLDF00002">
    <property type="entry name" value="enolase"/>
    <property type="match status" value="1"/>
</dbReference>
<dbReference type="SMART" id="SM01192">
    <property type="entry name" value="Enolase_C"/>
    <property type="match status" value="1"/>
</dbReference>
<dbReference type="SMART" id="SM01193">
    <property type="entry name" value="Enolase_N"/>
    <property type="match status" value="1"/>
</dbReference>
<dbReference type="SUPFAM" id="SSF51604">
    <property type="entry name" value="Enolase C-terminal domain-like"/>
    <property type="match status" value="1"/>
</dbReference>
<dbReference type="SUPFAM" id="SSF54826">
    <property type="entry name" value="Enolase N-terminal domain-like"/>
    <property type="match status" value="1"/>
</dbReference>
<dbReference type="PROSITE" id="PS00164">
    <property type="entry name" value="ENOLASE"/>
    <property type="match status" value="1"/>
</dbReference>
<protein>
    <recommendedName>
        <fullName evidence="1">Enolase</fullName>
        <ecNumber evidence="1">4.2.1.11</ecNumber>
    </recommendedName>
    <alternativeName>
        <fullName evidence="1">2-phospho-D-glycerate hydro-lyase</fullName>
    </alternativeName>
    <alternativeName>
        <fullName evidence="1">2-phosphoglycerate dehydratase</fullName>
    </alternativeName>
</protein>
<proteinExistence type="inferred from homology"/>
<gene>
    <name evidence="1" type="primary">eno</name>
    <name type="ordered locus">APL_1113</name>
</gene>
<name>ENO_ACTP2</name>
<feature type="chain" id="PRO_1000019181" description="Enolase">
    <location>
        <begin position="1"/>
        <end position="436"/>
    </location>
</feature>
<feature type="active site" description="Proton donor" evidence="1">
    <location>
        <position position="209"/>
    </location>
</feature>
<feature type="active site" description="Proton acceptor" evidence="1">
    <location>
        <position position="343"/>
    </location>
</feature>
<feature type="binding site" evidence="1">
    <location>
        <position position="167"/>
    </location>
    <ligand>
        <name>(2R)-2-phosphoglycerate</name>
        <dbReference type="ChEBI" id="CHEBI:58289"/>
    </ligand>
</feature>
<feature type="binding site" evidence="1">
    <location>
        <position position="246"/>
    </location>
    <ligand>
        <name>Mg(2+)</name>
        <dbReference type="ChEBI" id="CHEBI:18420"/>
    </ligand>
</feature>
<feature type="binding site" evidence="1">
    <location>
        <position position="291"/>
    </location>
    <ligand>
        <name>Mg(2+)</name>
        <dbReference type="ChEBI" id="CHEBI:18420"/>
    </ligand>
</feature>
<feature type="binding site" evidence="1">
    <location>
        <position position="318"/>
    </location>
    <ligand>
        <name>Mg(2+)</name>
        <dbReference type="ChEBI" id="CHEBI:18420"/>
    </ligand>
</feature>
<feature type="binding site" evidence="1">
    <location>
        <position position="343"/>
    </location>
    <ligand>
        <name>(2R)-2-phosphoglycerate</name>
        <dbReference type="ChEBI" id="CHEBI:58289"/>
    </ligand>
</feature>
<feature type="binding site" evidence="1">
    <location>
        <position position="372"/>
    </location>
    <ligand>
        <name>(2R)-2-phosphoglycerate</name>
        <dbReference type="ChEBI" id="CHEBI:58289"/>
    </ligand>
</feature>
<feature type="binding site" evidence="1">
    <location>
        <position position="373"/>
    </location>
    <ligand>
        <name>(2R)-2-phosphoglycerate</name>
        <dbReference type="ChEBI" id="CHEBI:58289"/>
    </ligand>
</feature>
<feature type="binding site" evidence="1">
    <location>
        <position position="394"/>
    </location>
    <ligand>
        <name>(2R)-2-phosphoglycerate</name>
        <dbReference type="ChEBI" id="CHEBI:58289"/>
    </ligand>
</feature>
<sequence>MAKIVKVIGREIIDSRGNPTVEAEVHLEGGFVGLAAAPSGASTGSREALELRDGDKSRFLGKGVLKAVSAVNNEIAQAILGKDGSAQAEIDQIMIDLDGTDNKSKFGANAILAVSLATAKAAAASKGLPLYAYIAELNGTPGVYSMPLPMMNIINGGEHADNNVDIQEFMIQPVGASTLKEALRIGAEVFHNLAKVLKSKGLNTAVGDEGGFAPNLASNADALACIKEAVEKAGYVLGKDVTLAMDCASSEFYNKENGLYEMKGEGKSFTSQEFTHYLEGLCNEYPIKSIEDGQDESDWEGFAYQTKVLGGKIQLVGDDLFVTNTKILKEGIEKGIANSILIKFNQIGSLTETLAAIKMAKDAGYTAVISHRSGETEDATIADLAVGTAAGQIKTGSMSRSDRVAKYNQLIRIEEALAAAGTPAPFNGLKEVKGQA</sequence>
<accession>A3N1B9</accession>
<keyword id="KW-0963">Cytoplasm</keyword>
<keyword id="KW-0324">Glycolysis</keyword>
<keyword id="KW-0456">Lyase</keyword>
<keyword id="KW-0460">Magnesium</keyword>
<keyword id="KW-0479">Metal-binding</keyword>
<keyword id="KW-1185">Reference proteome</keyword>
<keyword id="KW-0964">Secreted</keyword>
<organism>
    <name type="scientific">Actinobacillus pleuropneumoniae serotype 5b (strain L20)</name>
    <dbReference type="NCBI Taxonomy" id="416269"/>
    <lineage>
        <taxon>Bacteria</taxon>
        <taxon>Pseudomonadati</taxon>
        <taxon>Pseudomonadota</taxon>
        <taxon>Gammaproteobacteria</taxon>
        <taxon>Pasteurellales</taxon>
        <taxon>Pasteurellaceae</taxon>
        <taxon>Actinobacillus</taxon>
    </lineage>
</organism>